<sequence>MTDQQNTEAAEAQGPQFSLQRIYVRDLSFEAPKSPAIFRQEWTPSVALDLNTRQKALEGDFHEVVLTLSVTVKNGEEVAFIAEVQQAGIFLIQGLDEASMSHTLGAFCPNILFPYARETLDSLVTRGSFPALMLAPVNFDALYAQELQRMQQEGSSTVQ</sequence>
<accession>C3K7C1</accession>
<feature type="chain" id="PRO_1000213108" description="Protein-export protein SecB">
    <location>
        <begin position="1"/>
        <end position="159"/>
    </location>
</feature>
<gene>
    <name evidence="1" type="primary">secB</name>
    <name type="ordered locus">PFLU_0340</name>
</gene>
<keyword id="KW-0143">Chaperone</keyword>
<keyword id="KW-0963">Cytoplasm</keyword>
<keyword id="KW-0653">Protein transport</keyword>
<keyword id="KW-0811">Translocation</keyword>
<keyword id="KW-0813">Transport</keyword>
<comment type="function">
    <text evidence="1">One of the proteins required for the normal export of preproteins out of the cell cytoplasm. It is a molecular chaperone that binds to a subset of precursor proteins, maintaining them in a translocation-competent state. It also specifically binds to its receptor SecA.</text>
</comment>
<comment type="subunit">
    <text evidence="1">Homotetramer, a dimer of dimers. One homotetramer interacts with 1 SecA dimer.</text>
</comment>
<comment type="subcellular location">
    <subcellularLocation>
        <location evidence="1">Cytoplasm</location>
    </subcellularLocation>
</comment>
<comment type="similarity">
    <text evidence="1">Belongs to the SecB family.</text>
</comment>
<evidence type="ECO:0000255" key="1">
    <source>
        <dbReference type="HAMAP-Rule" id="MF_00821"/>
    </source>
</evidence>
<reference key="1">
    <citation type="journal article" date="2009" name="Genome Biol.">
        <title>Genomic and genetic analyses of diversity and plant interactions of Pseudomonas fluorescens.</title>
        <authorList>
            <person name="Silby M.W."/>
            <person name="Cerdeno-Tarraga A.M."/>
            <person name="Vernikos G.S."/>
            <person name="Giddens S.R."/>
            <person name="Jackson R.W."/>
            <person name="Preston G.M."/>
            <person name="Zhang X.-X."/>
            <person name="Moon C.D."/>
            <person name="Gehrig S.M."/>
            <person name="Godfrey S.A.C."/>
            <person name="Knight C.G."/>
            <person name="Malone J.G."/>
            <person name="Robinson Z."/>
            <person name="Spiers A.J."/>
            <person name="Harris S."/>
            <person name="Challis G.L."/>
            <person name="Yaxley A.M."/>
            <person name="Harris D."/>
            <person name="Seeger K."/>
            <person name="Murphy L."/>
            <person name="Rutter S."/>
            <person name="Squares R."/>
            <person name="Quail M.A."/>
            <person name="Saunders E."/>
            <person name="Mavromatis K."/>
            <person name="Brettin T.S."/>
            <person name="Bentley S.D."/>
            <person name="Hothersall J."/>
            <person name="Stephens E."/>
            <person name="Thomas C.M."/>
            <person name="Parkhill J."/>
            <person name="Levy S.B."/>
            <person name="Rainey P.B."/>
            <person name="Thomson N.R."/>
        </authorList>
    </citation>
    <scope>NUCLEOTIDE SEQUENCE [LARGE SCALE GENOMIC DNA]</scope>
    <source>
        <strain>SBW25</strain>
    </source>
</reference>
<name>SECB_PSEFS</name>
<organism>
    <name type="scientific">Pseudomonas fluorescens (strain SBW25)</name>
    <dbReference type="NCBI Taxonomy" id="216595"/>
    <lineage>
        <taxon>Bacteria</taxon>
        <taxon>Pseudomonadati</taxon>
        <taxon>Pseudomonadota</taxon>
        <taxon>Gammaproteobacteria</taxon>
        <taxon>Pseudomonadales</taxon>
        <taxon>Pseudomonadaceae</taxon>
        <taxon>Pseudomonas</taxon>
    </lineage>
</organism>
<proteinExistence type="inferred from homology"/>
<protein>
    <recommendedName>
        <fullName evidence="1">Protein-export protein SecB</fullName>
    </recommendedName>
</protein>
<dbReference type="EMBL" id="AM181176">
    <property type="protein sequence ID" value="CAY46617.1"/>
    <property type="molecule type" value="Genomic_DNA"/>
</dbReference>
<dbReference type="RefSeq" id="WP_012721755.1">
    <property type="nucleotide sequence ID" value="NC_012660.1"/>
</dbReference>
<dbReference type="SMR" id="C3K7C1"/>
<dbReference type="STRING" id="294.SRM1_00389"/>
<dbReference type="GeneID" id="93461940"/>
<dbReference type="eggNOG" id="COG1952">
    <property type="taxonomic scope" value="Bacteria"/>
</dbReference>
<dbReference type="HOGENOM" id="CLU_111574_1_0_6"/>
<dbReference type="OrthoDB" id="9795145at2"/>
<dbReference type="GO" id="GO:0005737">
    <property type="term" value="C:cytoplasm"/>
    <property type="evidence" value="ECO:0007669"/>
    <property type="project" value="UniProtKB-SubCell"/>
</dbReference>
<dbReference type="GO" id="GO:0051082">
    <property type="term" value="F:unfolded protein binding"/>
    <property type="evidence" value="ECO:0007669"/>
    <property type="project" value="InterPro"/>
</dbReference>
<dbReference type="GO" id="GO:0006457">
    <property type="term" value="P:protein folding"/>
    <property type="evidence" value="ECO:0007669"/>
    <property type="project" value="UniProtKB-UniRule"/>
</dbReference>
<dbReference type="GO" id="GO:0051262">
    <property type="term" value="P:protein tetramerization"/>
    <property type="evidence" value="ECO:0007669"/>
    <property type="project" value="InterPro"/>
</dbReference>
<dbReference type="GO" id="GO:0015031">
    <property type="term" value="P:protein transport"/>
    <property type="evidence" value="ECO:0007669"/>
    <property type="project" value="UniProtKB-UniRule"/>
</dbReference>
<dbReference type="Gene3D" id="3.10.420.10">
    <property type="entry name" value="SecB-like"/>
    <property type="match status" value="1"/>
</dbReference>
<dbReference type="HAMAP" id="MF_00821">
    <property type="entry name" value="SecB"/>
    <property type="match status" value="1"/>
</dbReference>
<dbReference type="InterPro" id="IPR003708">
    <property type="entry name" value="SecB"/>
</dbReference>
<dbReference type="InterPro" id="IPR035958">
    <property type="entry name" value="SecB-like_sf"/>
</dbReference>
<dbReference type="NCBIfam" id="NF004393">
    <property type="entry name" value="PRK05751.1-4"/>
    <property type="match status" value="1"/>
</dbReference>
<dbReference type="NCBIfam" id="TIGR00809">
    <property type="entry name" value="secB"/>
    <property type="match status" value="1"/>
</dbReference>
<dbReference type="PANTHER" id="PTHR36918">
    <property type="match status" value="1"/>
</dbReference>
<dbReference type="PANTHER" id="PTHR36918:SF1">
    <property type="entry name" value="PROTEIN-EXPORT PROTEIN SECB"/>
    <property type="match status" value="1"/>
</dbReference>
<dbReference type="Pfam" id="PF02556">
    <property type="entry name" value="SecB"/>
    <property type="match status" value="1"/>
</dbReference>
<dbReference type="PRINTS" id="PR01594">
    <property type="entry name" value="SECBCHAPRONE"/>
</dbReference>
<dbReference type="SUPFAM" id="SSF54611">
    <property type="entry name" value="SecB-like"/>
    <property type="match status" value="1"/>
</dbReference>